<proteinExistence type="inferred from homology"/>
<feature type="chain" id="PRO_0000262415" description="N-succinylglutamate 5-semialdehyde dehydrogenase">
    <location>
        <begin position="1"/>
        <end position="488"/>
    </location>
</feature>
<feature type="active site" evidence="1">
    <location>
        <position position="244"/>
    </location>
</feature>
<feature type="active site" evidence="1">
    <location>
        <position position="278"/>
    </location>
</feature>
<feature type="binding site" evidence="1">
    <location>
        <begin position="221"/>
        <end position="226"/>
    </location>
    <ligand>
        <name>NAD(+)</name>
        <dbReference type="ChEBI" id="CHEBI:57540"/>
    </ligand>
</feature>
<protein>
    <recommendedName>
        <fullName evidence="1">N-succinylglutamate 5-semialdehyde dehydrogenase</fullName>
        <ecNumber evidence="1">1.2.1.71</ecNumber>
    </recommendedName>
    <alternativeName>
        <fullName evidence="1">Succinylglutamic semialdehyde dehydrogenase</fullName>
        <shortName evidence="1">SGSD</shortName>
    </alternativeName>
</protein>
<organism>
    <name type="scientific">Pseudomonas fluorescens (strain Pf0-1)</name>
    <dbReference type="NCBI Taxonomy" id="205922"/>
    <lineage>
        <taxon>Bacteria</taxon>
        <taxon>Pseudomonadati</taxon>
        <taxon>Pseudomonadota</taxon>
        <taxon>Gammaproteobacteria</taxon>
        <taxon>Pseudomonadales</taxon>
        <taxon>Pseudomonadaceae</taxon>
        <taxon>Pseudomonas</taxon>
    </lineage>
</organism>
<keyword id="KW-0056">Arginine metabolism</keyword>
<keyword id="KW-0520">NAD</keyword>
<keyword id="KW-0560">Oxidoreductase</keyword>
<dbReference type="EC" id="1.2.1.71" evidence="1"/>
<dbReference type="EMBL" id="CP000094">
    <property type="protein sequence ID" value="ABA76019.1"/>
    <property type="molecule type" value="Genomic_DNA"/>
</dbReference>
<dbReference type="SMR" id="Q3K885"/>
<dbReference type="KEGG" id="pfo:Pfl01_4282"/>
<dbReference type="eggNOG" id="COG1012">
    <property type="taxonomic scope" value="Bacteria"/>
</dbReference>
<dbReference type="HOGENOM" id="CLU_005391_1_0_6"/>
<dbReference type="UniPathway" id="UPA00185">
    <property type="reaction ID" value="UER00282"/>
</dbReference>
<dbReference type="Proteomes" id="UP000002704">
    <property type="component" value="Chromosome"/>
</dbReference>
<dbReference type="GO" id="GO:0043824">
    <property type="term" value="F:succinylglutamate-semialdehyde dehydrogenase activity"/>
    <property type="evidence" value="ECO:0007669"/>
    <property type="project" value="UniProtKB-EC"/>
</dbReference>
<dbReference type="GO" id="GO:0019544">
    <property type="term" value="P:arginine catabolic process to glutamate"/>
    <property type="evidence" value="ECO:0007669"/>
    <property type="project" value="UniProtKB-UniRule"/>
</dbReference>
<dbReference type="GO" id="GO:0019545">
    <property type="term" value="P:arginine catabolic process to succinate"/>
    <property type="evidence" value="ECO:0007669"/>
    <property type="project" value="UniProtKB-UniRule"/>
</dbReference>
<dbReference type="CDD" id="cd07095">
    <property type="entry name" value="ALDH_SGSD_AstD"/>
    <property type="match status" value="1"/>
</dbReference>
<dbReference type="FunFam" id="3.40.309.10:FF:000013">
    <property type="entry name" value="N-succinylglutamate 5-semialdehyde dehydrogenase"/>
    <property type="match status" value="1"/>
</dbReference>
<dbReference type="FunFam" id="3.40.605.10:FF:000010">
    <property type="entry name" value="N-succinylglutamate 5-semialdehyde dehydrogenase"/>
    <property type="match status" value="1"/>
</dbReference>
<dbReference type="Gene3D" id="3.40.605.10">
    <property type="entry name" value="Aldehyde Dehydrogenase, Chain A, domain 1"/>
    <property type="match status" value="1"/>
</dbReference>
<dbReference type="Gene3D" id="3.40.309.10">
    <property type="entry name" value="Aldehyde Dehydrogenase, Chain A, domain 2"/>
    <property type="match status" value="1"/>
</dbReference>
<dbReference type="HAMAP" id="MF_01174">
    <property type="entry name" value="Aldedh_AstD"/>
    <property type="match status" value="1"/>
</dbReference>
<dbReference type="InterPro" id="IPR016161">
    <property type="entry name" value="Ald_DH/histidinol_DH"/>
</dbReference>
<dbReference type="InterPro" id="IPR016163">
    <property type="entry name" value="Ald_DH_C"/>
</dbReference>
<dbReference type="InterPro" id="IPR016160">
    <property type="entry name" value="Ald_DH_CS_CYS"/>
</dbReference>
<dbReference type="InterPro" id="IPR029510">
    <property type="entry name" value="Ald_DH_CS_GLU"/>
</dbReference>
<dbReference type="InterPro" id="IPR016162">
    <property type="entry name" value="Ald_DH_N"/>
</dbReference>
<dbReference type="InterPro" id="IPR015590">
    <property type="entry name" value="Aldehyde_DH_dom"/>
</dbReference>
<dbReference type="InterPro" id="IPR017649">
    <property type="entry name" value="SuccinylGlu_semiald_DH_AstD"/>
</dbReference>
<dbReference type="NCBIfam" id="TIGR03240">
    <property type="entry name" value="arg_catab_astD"/>
    <property type="match status" value="1"/>
</dbReference>
<dbReference type="NCBIfam" id="NF006992">
    <property type="entry name" value="PRK09457.1"/>
    <property type="match status" value="1"/>
</dbReference>
<dbReference type="PANTHER" id="PTHR11699">
    <property type="entry name" value="ALDEHYDE DEHYDROGENASE-RELATED"/>
    <property type="match status" value="1"/>
</dbReference>
<dbReference type="Pfam" id="PF00171">
    <property type="entry name" value="Aldedh"/>
    <property type="match status" value="1"/>
</dbReference>
<dbReference type="SUPFAM" id="SSF53720">
    <property type="entry name" value="ALDH-like"/>
    <property type="match status" value="1"/>
</dbReference>
<dbReference type="PROSITE" id="PS00070">
    <property type="entry name" value="ALDEHYDE_DEHYDR_CYS"/>
    <property type="match status" value="1"/>
</dbReference>
<dbReference type="PROSITE" id="PS00687">
    <property type="entry name" value="ALDEHYDE_DEHYDR_GLU"/>
    <property type="match status" value="1"/>
</dbReference>
<name>ASTD_PSEPF</name>
<sequence length="488" mass="51250">MNSLYIAGEWLAGQGEAFQSLNPVTQQVLWSGEGATAAQVESAVQAARQAFPGWARRTLEDRISVLEAFAAALKNHADELARTIGEETGKPLWEAATEVTSMVNKIAISVQSYRERTGEKSGPLGDATAVLRHKPHGVVAVFGPYNFPGHLPNGHIVPALLAGNSVLFKPSELTPKVAELTVKCWIEAGLPAGVLNLLQGARETGIALAANPGIDGLFFTGSSRTGNHLHQQFAGRPDKILALEMGGNNPLVVDQVADIDAAVYTIIQSAFISAGQRCTCARRLLVPEGAWGDSLLKRLVEVSSTIEVGAFDQQPAPFMGSVVSLGAAKALMDAQAHLLANGAVSLLAMTQPQAQSALLTPGIVDVTAVADRSDEELFGPLLQVIRYADFAAAIAEANDTAFGLAAGLLSDSEERYQQFWLESRAGIVNWNKQLTGAASSAPFGGVGASGNHRASAYYAADYCAYPVASLETPSLVLPAALTPGVKMA</sequence>
<gene>
    <name evidence="1" type="primary">astD</name>
    <name type="ordered locus">Pfl01_4282</name>
</gene>
<accession>Q3K885</accession>
<evidence type="ECO:0000255" key="1">
    <source>
        <dbReference type="HAMAP-Rule" id="MF_01174"/>
    </source>
</evidence>
<reference key="1">
    <citation type="journal article" date="2009" name="Genome Biol.">
        <title>Genomic and genetic analyses of diversity and plant interactions of Pseudomonas fluorescens.</title>
        <authorList>
            <person name="Silby M.W."/>
            <person name="Cerdeno-Tarraga A.M."/>
            <person name="Vernikos G.S."/>
            <person name="Giddens S.R."/>
            <person name="Jackson R.W."/>
            <person name="Preston G.M."/>
            <person name="Zhang X.-X."/>
            <person name="Moon C.D."/>
            <person name="Gehrig S.M."/>
            <person name="Godfrey S.A.C."/>
            <person name="Knight C.G."/>
            <person name="Malone J.G."/>
            <person name="Robinson Z."/>
            <person name="Spiers A.J."/>
            <person name="Harris S."/>
            <person name="Challis G.L."/>
            <person name="Yaxley A.M."/>
            <person name="Harris D."/>
            <person name="Seeger K."/>
            <person name="Murphy L."/>
            <person name="Rutter S."/>
            <person name="Squares R."/>
            <person name="Quail M.A."/>
            <person name="Saunders E."/>
            <person name="Mavromatis K."/>
            <person name="Brettin T.S."/>
            <person name="Bentley S.D."/>
            <person name="Hothersall J."/>
            <person name="Stephens E."/>
            <person name="Thomas C.M."/>
            <person name="Parkhill J."/>
            <person name="Levy S.B."/>
            <person name="Rainey P.B."/>
            <person name="Thomson N.R."/>
        </authorList>
    </citation>
    <scope>NUCLEOTIDE SEQUENCE [LARGE SCALE GENOMIC DNA]</scope>
    <source>
        <strain>Pf0-1</strain>
    </source>
</reference>
<comment type="function">
    <text evidence="1">Catalyzes the NAD-dependent reduction of succinylglutamate semialdehyde into succinylglutamate.</text>
</comment>
<comment type="catalytic activity">
    <reaction evidence="1">
        <text>N-succinyl-L-glutamate 5-semialdehyde + NAD(+) + H2O = N-succinyl-L-glutamate + NADH + 2 H(+)</text>
        <dbReference type="Rhea" id="RHEA:10812"/>
        <dbReference type="ChEBI" id="CHEBI:15377"/>
        <dbReference type="ChEBI" id="CHEBI:15378"/>
        <dbReference type="ChEBI" id="CHEBI:57540"/>
        <dbReference type="ChEBI" id="CHEBI:57945"/>
        <dbReference type="ChEBI" id="CHEBI:58520"/>
        <dbReference type="ChEBI" id="CHEBI:58763"/>
        <dbReference type="EC" id="1.2.1.71"/>
    </reaction>
</comment>
<comment type="pathway">
    <text evidence="1">Amino-acid degradation; L-arginine degradation via AST pathway; L-glutamate and succinate from L-arginine: step 4/5.</text>
</comment>
<comment type="similarity">
    <text evidence="1">Belongs to the aldehyde dehydrogenase family. AstD subfamily.</text>
</comment>